<evidence type="ECO:0000255" key="1">
    <source>
        <dbReference type="HAMAP-Rule" id="MF_00679"/>
    </source>
</evidence>
<protein>
    <recommendedName>
        <fullName evidence="1">Chaperone protein HscA</fullName>
    </recommendedName>
    <alternativeName>
        <fullName evidence="1">Hsc66</fullName>
    </alternativeName>
</protein>
<feature type="chain" id="PRO_1000131696" description="Chaperone protein HscA">
    <location>
        <begin position="1"/>
        <end position="616"/>
    </location>
</feature>
<sequence>MALLQISEPGLSAAPHQRRLAAGIDLGTTNSLVATVRSGQAETLADHEGRHLLPSVVHYQQQGHSVGYDARTNAALDTANTISSVKRLMGRSLADIQQRYPHLPYQFQASENGLPMIETAAGLLNPVRVSADILKALAARATEALAGELDGVVITVPAYFDDAQRQGTKDAARLAGLHVLRLLNEPTAAAIAYGLDSGQEGVIAVYDLGGGTFDISILRLSRGVFEVLATGGDSALGGDDFDHLLADYIREQADIPDRSDNRVQRELLDAAIAAKIALSDADSVTVNVAGWQGEISREQFNELIAPLVKRTLLACRRALKDAGVEADEVLEVVMVGGSTRVPLVRERVGEFFGRPPLTSIDPDKVVAIGAAIQADILVGNKPDSEMLLLDVIPLSLGLETMGGLVEKVIPRNTTIPVARAQDFTTFKDGQTAMSIHVMQGERELVQDCRSLARFALRGIPALPAGGAHIRVTFQVDADGLLSVTAMEKSTGVEASIQVKPSYGLTDSEIASMIKDSMSYAEQDVKARMLAEQKVEAARVLESLHGALAADAALLSAAERQVIDNAAAHLSEVAQGDDVDAIEQAIKNVDKQTQDFAARRMDQSVRRALKGHSVDEV</sequence>
<gene>
    <name evidence="1" type="primary">hscA</name>
    <name type="ordered locus">SbBS512_E2901</name>
</gene>
<comment type="function">
    <text evidence="1">Chaperone involved in the maturation of iron-sulfur cluster-containing proteins. Has a low intrinsic ATPase activity which is markedly stimulated by HscB. Involved in the maturation of IscU.</text>
</comment>
<comment type="similarity">
    <text evidence="1">Belongs to the heat shock protein 70 family.</text>
</comment>
<proteinExistence type="inferred from homology"/>
<organism>
    <name type="scientific">Shigella boydii serotype 18 (strain CDC 3083-94 / BS512)</name>
    <dbReference type="NCBI Taxonomy" id="344609"/>
    <lineage>
        <taxon>Bacteria</taxon>
        <taxon>Pseudomonadati</taxon>
        <taxon>Pseudomonadota</taxon>
        <taxon>Gammaproteobacteria</taxon>
        <taxon>Enterobacterales</taxon>
        <taxon>Enterobacteriaceae</taxon>
        <taxon>Shigella</taxon>
    </lineage>
</organism>
<name>HSCA_SHIB3</name>
<keyword id="KW-0067">ATP-binding</keyword>
<keyword id="KW-0143">Chaperone</keyword>
<keyword id="KW-0547">Nucleotide-binding</keyword>
<keyword id="KW-1185">Reference proteome</keyword>
<accession>B2TXV1</accession>
<dbReference type="EMBL" id="CP001063">
    <property type="protein sequence ID" value="ACD06577.1"/>
    <property type="molecule type" value="Genomic_DNA"/>
</dbReference>
<dbReference type="RefSeq" id="WP_001196599.1">
    <property type="nucleotide sequence ID" value="NC_010658.1"/>
</dbReference>
<dbReference type="SMR" id="B2TXV1"/>
<dbReference type="STRING" id="344609.SbBS512_E2901"/>
<dbReference type="KEGG" id="sbc:SbBS512_E2901"/>
<dbReference type="HOGENOM" id="CLU_005965_2_1_6"/>
<dbReference type="Proteomes" id="UP000001030">
    <property type="component" value="Chromosome"/>
</dbReference>
<dbReference type="GO" id="GO:0005524">
    <property type="term" value="F:ATP binding"/>
    <property type="evidence" value="ECO:0007669"/>
    <property type="project" value="UniProtKB-KW"/>
</dbReference>
<dbReference type="GO" id="GO:0016887">
    <property type="term" value="F:ATP hydrolysis activity"/>
    <property type="evidence" value="ECO:0007669"/>
    <property type="project" value="UniProtKB-UniRule"/>
</dbReference>
<dbReference type="GO" id="GO:0140662">
    <property type="term" value="F:ATP-dependent protein folding chaperone"/>
    <property type="evidence" value="ECO:0007669"/>
    <property type="project" value="InterPro"/>
</dbReference>
<dbReference type="GO" id="GO:0051082">
    <property type="term" value="F:unfolded protein binding"/>
    <property type="evidence" value="ECO:0007669"/>
    <property type="project" value="InterPro"/>
</dbReference>
<dbReference type="GO" id="GO:0016226">
    <property type="term" value="P:iron-sulfur cluster assembly"/>
    <property type="evidence" value="ECO:0007669"/>
    <property type="project" value="InterPro"/>
</dbReference>
<dbReference type="CDD" id="cd10236">
    <property type="entry name" value="ASKHA_NBD_HSP70_HscA"/>
    <property type="match status" value="1"/>
</dbReference>
<dbReference type="FunFam" id="1.20.1270.10:FF:000006">
    <property type="entry name" value="Chaperone protein HscA"/>
    <property type="match status" value="1"/>
</dbReference>
<dbReference type="FunFam" id="3.30.420.40:FF:000046">
    <property type="entry name" value="Chaperone protein HscA"/>
    <property type="match status" value="1"/>
</dbReference>
<dbReference type="FunFam" id="3.90.640.10:FF:000013">
    <property type="entry name" value="Chaperone protein HscA"/>
    <property type="match status" value="1"/>
</dbReference>
<dbReference type="FunFam" id="2.60.34.10:FF:000005">
    <property type="entry name" value="Chaperone protein HscA homolog"/>
    <property type="match status" value="1"/>
</dbReference>
<dbReference type="FunFam" id="3.30.420.40:FF:000020">
    <property type="entry name" value="Chaperone protein HscA homolog"/>
    <property type="match status" value="1"/>
</dbReference>
<dbReference type="Gene3D" id="1.20.1270.10">
    <property type="match status" value="1"/>
</dbReference>
<dbReference type="Gene3D" id="3.30.420.40">
    <property type="match status" value="2"/>
</dbReference>
<dbReference type="Gene3D" id="3.90.640.10">
    <property type="entry name" value="Actin, Chain A, domain 4"/>
    <property type="match status" value="1"/>
</dbReference>
<dbReference type="Gene3D" id="2.60.34.10">
    <property type="entry name" value="Substrate Binding Domain Of DNAk, Chain A, domain 1"/>
    <property type="match status" value="1"/>
</dbReference>
<dbReference type="HAMAP" id="MF_00679">
    <property type="entry name" value="HscA"/>
    <property type="match status" value="1"/>
</dbReference>
<dbReference type="InterPro" id="IPR043129">
    <property type="entry name" value="ATPase_NBD"/>
</dbReference>
<dbReference type="InterPro" id="IPR018181">
    <property type="entry name" value="Heat_shock_70_CS"/>
</dbReference>
<dbReference type="InterPro" id="IPR042039">
    <property type="entry name" value="HscA_NBD"/>
</dbReference>
<dbReference type="InterPro" id="IPR029048">
    <property type="entry name" value="HSP70_C_sf"/>
</dbReference>
<dbReference type="InterPro" id="IPR029047">
    <property type="entry name" value="HSP70_peptide-bd_sf"/>
</dbReference>
<dbReference type="InterPro" id="IPR013126">
    <property type="entry name" value="Hsp_70_fam"/>
</dbReference>
<dbReference type="InterPro" id="IPR010236">
    <property type="entry name" value="ISC_FeS_clus_asmbl_HscA"/>
</dbReference>
<dbReference type="NCBIfam" id="TIGR01991">
    <property type="entry name" value="HscA"/>
    <property type="match status" value="1"/>
</dbReference>
<dbReference type="NCBIfam" id="NF003520">
    <property type="entry name" value="PRK05183.1"/>
    <property type="match status" value="1"/>
</dbReference>
<dbReference type="PANTHER" id="PTHR19375">
    <property type="entry name" value="HEAT SHOCK PROTEIN 70KDA"/>
    <property type="match status" value="1"/>
</dbReference>
<dbReference type="Pfam" id="PF00012">
    <property type="entry name" value="HSP70"/>
    <property type="match status" value="1"/>
</dbReference>
<dbReference type="PRINTS" id="PR00301">
    <property type="entry name" value="HEATSHOCK70"/>
</dbReference>
<dbReference type="SUPFAM" id="SSF53067">
    <property type="entry name" value="Actin-like ATPase domain"/>
    <property type="match status" value="2"/>
</dbReference>
<dbReference type="SUPFAM" id="SSF100934">
    <property type="entry name" value="Heat shock protein 70kD (HSP70), C-terminal subdomain"/>
    <property type="match status" value="1"/>
</dbReference>
<dbReference type="SUPFAM" id="SSF100920">
    <property type="entry name" value="Heat shock protein 70kD (HSP70), peptide-binding domain"/>
    <property type="match status" value="1"/>
</dbReference>
<dbReference type="PROSITE" id="PS00297">
    <property type="entry name" value="HSP70_1"/>
    <property type="match status" value="1"/>
</dbReference>
<dbReference type="PROSITE" id="PS00329">
    <property type="entry name" value="HSP70_2"/>
    <property type="match status" value="1"/>
</dbReference>
<dbReference type="PROSITE" id="PS01036">
    <property type="entry name" value="HSP70_3"/>
    <property type="match status" value="1"/>
</dbReference>
<reference key="1">
    <citation type="submission" date="2008-05" db="EMBL/GenBank/DDBJ databases">
        <title>Complete sequence of Shigella boydii serotype 18 strain BS512.</title>
        <authorList>
            <person name="Rasko D.A."/>
            <person name="Rosovitz M."/>
            <person name="Maurelli A.T."/>
            <person name="Myers G."/>
            <person name="Seshadri R."/>
            <person name="Cer R."/>
            <person name="Jiang L."/>
            <person name="Ravel J."/>
            <person name="Sebastian Y."/>
        </authorList>
    </citation>
    <scope>NUCLEOTIDE SEQUENCE [LARGE SCALE GENOMIC DNA]</scope>
    <source>
        <strain>CDC 3083-94 / BS512</strain>
    </source>
</reference>